<name>CXG1_CHICK</name>
<reference key="1">
    <citation type="journal article" date="1990" name="J. Biol. Chem.">
        <title>Molecular cloning and developmental expression of two chick embryo gap junction proteins.</title>
        <authorList>
            <person name="Beyer E.C."/>
        </authorList>
    </citation>
    <scope>NUCLEOTIDE SEQUENCE [MRNA]</scope>
</reference>
<feature type="chain" id="PRO_0000057828" description="Gap junction gamma-1 protein">
    <location>
        <begin position="1"/>
        <end position="394"/>
    </location>
</feature>
<feature type="topological domain" description="Cytoplasmic" evidence="1">
    <location>
        <begin position="1"/>
        <end position="22"/>
    </location>
</feature>
<feature type="transmembrane region" description="Helical" evidence="1">
    <location>
        <begin position="23"/>
        <end position="45"/>
    </location>
</feature>
<feature type="topological domain" description="Extracellular" evidence="1">
    <location>
        <begin position="46"/>
        <end position="75"/>
    </location>
</feature>
<feature type="transmembrane region" description="Helical" evidence="1">
    <location>
        <begin position="76"/>
        <end position="95"/>
    </location>
</feature>
<feature type="topological domain" description="Cytoplasmic" evidence="1">
    <location>
        <begin position="96"/>
        <end position="176"/>
    </location>
</feature>
<feature type="transmembrane region" description="Helical" evidence="1">
    <location>
        <begin position="177"/>
        <end position="199"/>
    </location>
</feature>
<feature type="topological domain" description="Extracellular" evidence="1">
    <location>
        <begin position="200"/>
        <end position="229"/>
    </location>
</feature>
<feature type="transmembrane region" description="Helical" evidence="1">
    <location>
        <begin position="230"/>
        <end position="252"/>
    </location>
</feature>
<feature type="topological domain" description="Cytoplasmic" evidence="1">
    <location>
        <begin position="253"/>
        <end position="394"/>
    </location>
</feature>
<feature type="region of interest" description="Disordered" evidence="2">
    <location>
        <begin position="354"/>
        <end position="394"/>
    </location>
</feature>
<feature type="compositionally biased region" description="Polar residues" evidence="2">
    <location>
        <begin position="356"/>
        <end position="366"/>
    </location>
</feature>
<feature type="compositionally biased region" description="Low complexity" evidence="2">
    <location>
        <begin position="374"/>
        <end position="394"/>
    </location>
</feature>
<dbReference type="EMBL" id="M35044">
    <property type="protein sequence ID" value="AAA48717.1"/>
    <property type="molecule type" value="mRNA"/>
</dbReference>
<dbReference type="PIR" id="A37819">
    <property type="entry name" value="A37819"/>
</dbReference>
<dbReference type="RefSeq" id="NP_990834.1">
    <property type="nucleotide sequence ID" value="NM_205503.1"/>
</dbReference>
<dbReference type="RefSeq" id="XP_015154699.1">
    <property type="nucleotide sequence ID" value="XM_015299213.1"/>
</dbReference>
<dbReference type="RefSeq" id="XP_015154700.1">
    <property type="nucleotide sequence ID" value="XM_015299214.1"/>
</dbReference>
<dbReference type="RefSeq" id="XP_015154701.1">
    <property type="nucleotide sequence ID" value="XM_015299215.1"/>
</dbReference>
<dbReference type="RefSeq" id="XP_015154702.1">
    <property type="nucleotide sequence ID" value="XM_015299216.1"/>
</dbReference>
<dbReference type="RefSeq" id="XP_015154704.1">
    <property type="nucleotide sequence ID" value="XM_015299218.1"/>
</dbReference>
<dbReference type="RefSeq" id="XP_015154705.1">
    <property type="nucleotide sequence ID" value="XM_015299219.1"/>
</dbReference>
<dbReference type="RefSeq" id="XP_015154706.1">
    <property type="nucleotide sequence ID" value="XM_015299220.1"/>
</dbReference>
<dbReference type="RefSeq" id="XP_015154707.1">
    <property type="nucleotide sequence ID" value="XM_015299221.1"/>
</dbReference>
<dbReference type="RefSeq" id="XP_015154708.1">
    <property type="nucleotide sequence ID" value="XM_015299222.1"/>
</dbReference>
<dbReference type="SMR" id="P18861"/>
<dbReference type="FunCoup" id="P18861">
    <property type="interactions" value="231"/>
</dbReference>
<dbReference type="STRING" id="9031.ENSGALP00000001471"/>
<dbReference type="PaxDb" id="9031-ENSGALP00000001471"/>
<dbReference type="Ensembl" id="ENSGALT00010053193.1">
    <property type="protein sequence ID" value="ENSGALP00010032051.1"/>
    <property type="gene ID" value="ENSGALG00010021869.1"/>
</dbReference>
<dbReference type="Ensembl" id="ENSGALT00010053196.1">
    <property type="protein sequence ID" value="ENSGALP00010032054.1"/>
    <property type="gene ID" value="ENSGALG00010021869.1"/>
</dbReference>
<dbReference type="Ensembl" id="ENSGALT00010053200.1">
    <property type="protein sequence ID" value="ENSGALP00010032057.1"/>
    <property type="gene ID" value="ENSGALG00010021869.1"/>
</dbReference>
<dbReference type="Ensembl" id="ENSGALT00010053208.1">
    <property type="protein sequence ID" value="ENSGALP00010032064.1"/>
    <property type="gene ID" value="ENSGALG00010021869.1"/>
</dbReference>
<dbReference type="Ensembl" id="ENSGALT00010053211.1">
    <property type="protein sequence ID" value="ENSGALP00010032067.1"/>
    <property type="gene ID" value="ENSGALG00010021869.1"/>
</dbReference>
<dbReference type="Ensembl" id="ENSGALT00010053216.1">
    <property type="protein sequence ID" value="ENSGALP00010032070.1"/>
    <property type="gene ID" value="ENSGALG00010021869.1"/>
</dbReference>
<dbReference type="Ensembl" id="ENSGALT00010053220.1">
    <property type="protein sequence ID" value="ENSGALP00010032072.1"/>
    <property type="gene ID" value="ENSGALG00010021869.1"/>
</dbReference>
<dbReference type="Ensembl" id="ENSGALT00010053223.1">
    <property type="protein sequence ID" value="ENSGALP00010032075.1"/>
    <property type="gene ID" value="ENSGALG00010021869.1"/>
</dbReference>
<dbReference type="Ensembl" id="ENSGALT00010053228.1">
    <property type="protein sequence ID" value="ENSGALP00010032079.1"/>
    <property type="gene ID" value="ENSGALG00010021869.1"/>
</dbReference>
<dbReference type="Ensembl" id="ENSGALT00010053230.1">
    <property type="protein sequence ID" value="ENSGALP00010032080.1"/>
    <property type="gene ID" value="ENSGALG00010021869.1"/>
</dbReference>
<dbReference type="GeneID" id="396501"/>
<dbReference type="KEGG" id="gga:396501"/>
<dbReference type="CTD" id="349149"/>
<dbReference type="VEuPathDB" id="HostDB:geneid_396501"/>
<dbReference type="eggNOG" id="ENOG502QV2G">
    <property type="taxonomic scope" value="Eukaryota"/>
</dbReference>
<dbReference type="GeneTree" id="ENSGT01130000278276"/>
<dbReference type="HOGENOM" id="CLU_037388_0_0_1"/>
<dbReference type="InParanoid" id="P18861"/>
<dbReference type="OMA" id="VRWKQHR"/>
<dbReference type="OrthoDB" id="8875898at2759"/>
<dbReference type="PhylomeDB" id="P18861"/>
<dbReference type="TreeFam" id="TF329606"/>
<dbReference type="Reactome" id="R-GGA-112303">
    <property type="pathway name" value="Electric Transmission Across Gap Junctions"/>
</dbReference>
<dbReference type="Reactome" id="R-GGA-190861">
    <property type="pathway name" value="Gap junction assembly"/>
</dbReference>
<dbReference type="PRO" id="PR:P18861"/>
<dbReference type="Proteomes" id="UP000000539">
    <property type="component" value="Chromosome 27"/>
</dbReference>
<dbReference type="Bgee" id="ENSGALG00000000997">
    <property type="expression patterns" value="Expressed in heart and 13 other cell types or tissues"/>
</dbReference>
<dbReference type="GO" id="GO:0005922">
    <property type="term" value="C:connexin complex"/>
    <property type="evidence" value="ECO:0000318"/>
    <property type="project" value="GO_Central"/>
</dbReference>
<dbReference type="GO" id="GO:0005783">
    <property type="term" value="C:endoplasmic reticulum"/>
    <property type="evidence" value="ECO:0007669"/>
    <property type="project" value="Ensembl"/>
</dbReference>
<dbReference type="GO" id="GO:0005654">
    <property type="term" value="C:nucleoplasm"/>
    <property type="evidence" value="ECO:0007669"/>
    <property type="project" value="Ensembl"/>
</dbReference>
<dbReference type="GO" id="GO:0045202">
    <property type="term" value="C:synapse"/>
    <property type="evidence" value="ECO:0007669"/>
    <property type="project" value="GOC"/>
</dbReference>
<dbReference type="GO" id="GO:0005243">
    <property type="term" value="F:gap junction channel activity"/>
    <property type="evidence" value="ECO:0000318"/>
    <property type="project" value="GO_Central"/>
</dbReference>
<dbReference type="GO" id="GO:0086077">
    <property type="term" value="F:gap junction channel activity involved in AV node cell-bundle of His cell electrical coupling"/>
    <property type="evidence" value="ECO:0007669"/>
    <property type="project" value="Ensembl"/>
</dbReference>
<dbReference type="GO" id="GO:0005216">
    <property type="term" value="F:monoatomic ion channel activity"/>
    <property type="evidence" value="ECO:0007669"/>
    <property type="project" value="Ensembl"/>
</dbReference>
<dbReference type="GO" id="GO:0048738">
    <property type="term" value="P:cardiac muscle tissue development"/>
    <property type="evidence" value="ECO:0007669"/>
    <property type="project" value="Ensembl"/>
</dbReference>
<dbReference type="GO" id="GO:0048468">
    <property type="term" value="P:cell development"/>
    <property type="evidence" value="ECO:0007669"/>
    <property type="project" value="Ensembl"/>
</dbReference>
<dbReference type="GO" id="GO:0007267">
    <property type="term" value="P:cell-cell signaling"/>
    <property type="evidence" value="ECO:0000318"/>
    <property type="project" value="GO_Central"/>
</dbReference>
<dbReference type="GO" id="GO:0007268">
    <property type="term" value="P:chemical synaptic transmission"/>
    <property type="evidence" value="ECO:0007669"/>
    <property type="project" value="Ensembl"/>
</dbReference>
<dbReference type="GO" id="GO:0016264">
    <property type="term" value="P:gap junction assembly"/>
    <property type="evidence" value="ECO:0007669"/>
    <property type="project" value="Ensembl"/>
</dbReference>
<dbReference type="GO" id="GO:0001570">
    <property type="term" value="P:vasculogenesis"/>
    <property type="evidence" value="ECO:0007669"/>
    <property type="project" value="Ensembl"/>
</dbReference>
<dbReference type="GO" id="GO:0007601">
    <property type="term" value="P:visual perception"/>
    <property type="evidence" value="ECO:0007669"/>
    <property type="project" value="Ensembl"/>
</dbReference>
<dbReference type="FunFam" id="1.20.1440.80:FF:000003">
    <property type="entry name" value="Gap junction protein"/>
    <property type="match status" value="1"/>
</dbReference>
<dbReference type="Gene3D" id="1.20.1440.80">
    <property type="entry name" value="Gap junction channel protein cysteine-rich domain"/>
    <property type="match status" value="1"/>
</dbReference>
<dbReference type="InterPro" id="IPR000500">
    <property type="entry name" value="Connexin"/>
</dbReference>
<dbReference type="InterPro" id="IPR002265">
    <property type="entry name" value="Connexin45"/>
</dbReference>
<dbReference type="InterPro" id="IPR019570">
    <property type="entry name" value="Connexin_CCC"/>
</dbReference>
<dbReference type="InterPro" id="IPR017990">
    <property type="entry name" value="Connexin_CS"/>
</dbReference>
<dbReference type="InterPro" id="IPR013092">
    <property type="entry name" value="Connexin_N"/>
</dbReference>
<dbReference type="InterPro" id="IPR038359">
    <property type="entry name" value="Connexin_N_sf"/>
</dbReference>
<dbReference type="PANTHER" id="PTHR11984">
    <property type="entry name" value="CONNEXIN"/>
    <property type="match status" value="1"/>
</dbReference>
<dbReference type="PANTHER" id="PTHR11984:SF6">
    <property type="entry name" value="GAP JUNCTION GAMMA-1 PROTEIN"/>
    <property type="match status" value="1"/>
</dbReference>
<dbReference type="Pfam" id="PF00029">
    <property type="entry name" value="Connexin"/>
    <property type="match status" value="1"/>
</dbReference>
<dbReference type="PRINTS" id="PR00206">
    <property type="entry name" value="CONNEXIN"/>
</dbReference>
<dbReference type="PRINTS" id="PR01136">
    <property type="entry name" value="CONNEXINA6"/>
</dbReference>
<dbReference type="SMART" id="SM00037">
    <property type="entry name" value="CNX"/>
    <property type="match status" value="1"/>
</dbReference>
<dbReference type="SMART" id="SM01089">
    <property type="entry name" value="Connexin_CCC"/>
    <property type="match status" value="1"/>
</dbReference>
<dbReference type="PROSITE" id="PS00407">
    <property type="entry name" value="CONNEXINS_1"/>
    <property type="match status" value="1"/>
</dbReference>
<dbReference type="PROSITE" id="PS00408">
    <property type="entry name" value="CONNEXINS_2"/>
    <property type="match status" value="1"/>
</dbReference>
<comment type="function">
    <text>One gap junction consists of a cluster of closely packed pairs of transmembrane channels, the connexons, through which materials of low MW diffuse from one cell to a neighboring cell.</text>
</comment>
<comment type="subunit">
    <text>A connexon is composed of a hexamer of connexins.</text>
</comment>
<comment type="subcellular location">
    <subcellularLocation>
        <location>Cell membrane</location>
        <topology>Multi-pass membrane protein</topology>
    </subcellularLocation>
    <subcellularLocation>
        <location>Cell junction</location>
        <location>Gap junction</location>
    </subcellularLocation>
</comment>
<comment type="tissue specificity">
    <text>Mostly in heart and stomach.</text>
</comment>
<comment type="similarity">
    <text evidence="3">Belongs to the connexin family. Gamma-type subfamily.</text>
</comment>
<organism>
    <name type="scientific">Gallus gallus</name>
    <name type="common">Chicken</name>
    <dbReference type="NCBI Taxonomy" id="9031"/>
    <lineage>
        <taxon>Eukaryota</taxon>
        <taxon>Metazoa</taxon>
        <taxon>Chordata</taxon>
        <taxon>Craniata</taxon>
        <taxon>Vertebrata</taxon>
        <taxon>Euteleostomi</taxon>
        <taxon>Archelosauria</taxon>
        <taxon>Archosauria</taxon>
        <taxon>Dinosauria</taxon>
        <taxon>Saurischia</taxon>
        <taxon>Theropoda</taxon>
        <taxon>Coelurosauria</taxon>
        <taxon>Aves</taxon>
        <taxon>Neognathae</taxon>
        <taxon>Galloanserae</taxon>
        <taxon>Galliformes</taxon>
        <taxon>Phasianidae</taxon>
        <taxon>Phasianinae</taxon>
        <taxon>Gallus</taxon>
    </lineage>
</organism>
<keyword id="KW-0965">Cell junction</keyword>
<keyword id="KW-1003">Cell membrane</keyword>
<keyword id="KW-0303">Gap junction</keyword>
<keyword id="KW-0472">Membrane</keyword>
<keyword id="KW-1185">Reference proteome</keyword>
<keyword id="KW-0812">Transmembrane</keyword>
<keyword id="KW-1133">Transmembrane helix</keyword>
<evidence type="ECO:0000255" key="1"/>
<evidence type="ECO:0000256" key="2">
    <source>
        <dbReference type="SAM" id="MobiDB-lite"/>
    </source>
</evidence>
<evidence type="ECO:0000305" key="3"/>
<gene>
    <name type="primary">GJC1</name>
    <name type="synonym">GJA7</name>
</gene>
<sequence>MSWSFLTRLLEEIHNHSTFVGKIWLSVLIVFRIVLTAVGGESIYYDEQSKFVCNTEQPGCENVCYDAFAPLSHVRFWVFQIILVATPSVMYLGYAIHKIARMVEHSDVDRRFRSKSFSTRWKQHRGLEEAEDDHEEDPMMYPEIELESERENKEQQPPAKAKHDGRRRIREDGLMRIYVLQLLVRATFEVGFLIGQYLLYGFEVSPVFVCSRKPCPHKIDCFISRPTEKTIFLLIMYGVSCMCLLLNVWEMLHLGFGTIRDTLNNKRKELEDSGTYNYPFTWNTPSAPPGYNIAVKPDQMQYTELSNAKMAYKQNKANIAQEQQYGSNEENIPADLENLQREIKVAQERLDMAIQAYNNQNNPGSSSREKKSKAGSNKSSASSKSGDGKNSVWI</sequence>
<protein>
    <recommendedName>
        <fullName>Gap junction gamma-1 protein</fullName>
    </recommendedName>
    <alternativeName>
        <fullName>Connexin-45</fullName>
        <shortName>Cx45</shortName>
    </alternativeName>
    <alternativeName>
        <fullName>Gap junction alpha-7 protein</fullName>
    </alternativeName>
</protein>
<accession>P18861</accession>
<proteinExistence type="evidence at transcript level"/>